<organism>
    <name type="scientific">Burkholderia pseudomallei (strain 1710b)</name>
    <dbReference type="NCBI Taxonomy" id="320372"/>
    <lineage>
        <taxon>Bacteria</taxon>
        <taxon>Pseudomonadati</taxon>
        <taxon>Pseudomonadota</taxon>
        <taxon>Betaproteobacteria</taxon>
        <taxon>Burkholderiales</taxon>
        <taxon>Burkholderiaceae</taxon>
        <taxon>Burkholderia</taxon>
        <taxon>pseudomallei group</taxon>
    </lineage>
</organism>
<keyword id="KW-0028">Amino-acid biosynthesis</keyword>
<keyword id="KW-0032">Aminotransferase</keyword>
<keyword id="KW-0368">Histidine biosynthesis</keyword>
<keyword id="KW-0663">Pyridoxal phosphate</keyword>
<keyword id="KW-0808">Transferase</keyword>
<gene>
    <name evidence="1" type="primary">hisC2</name>
    <name type="ordered locus">BURPS1710b_3692</name>
</gene>
<proteinExistence type="inferred from homology"/>
<protein>
    <recommendedName>
        <fullName evidence="1">Histidinol-phosphate aminotransferase 2</fullName>
        <ecNumber evidence="1">2.6.1.9</ecNumber>
    </recommendedName>
    <alternativeName>
        <fullName evidence="1">Imidazole acetol-phosphate transaminase 2</fullName>
    </alternativeName>
</protein>
<dbReference type="EC" id="2.6.1.9" evidence="1"/>
<dbReference type="EMBL" id="CP000124">
    <property type="protein sequence ID" value="ABA48455.1"/>
    <property type="molecule type" value="Genomic_DNA"/>
</dbReference>
<dbReference type="SMR" id="Q3JMZ7"/>
<dbReference type="EnsemblBacteria" id="ABA48455">
    <property type="protein sequence ID" value="ABA48455"/>
    <property type="gene ID" value="BURPS1710b_3692"/>
</dbReference>
<dbReference type="KEGG" id="bpm:BURPS1710b_3692"/>
<dbReference type="HOGENOM" id="CLU_017584_3_1_4"/>
<dbReference type="UniPathway" id="UPA00031">
    <property type="reaction ID" value="UER00012"/>
</dbReference>
<dbReference type="Proteomes" id="UP000002700">
    <property type="component" value="Chromosome I"/>
</dbReference>
<dbReference type="GO" id="GO:0004400">
    <property type="term" value="F:histidinol-phosphate transaminase activity"/>
    <property type="evidence" value="ECO:0007669"/>
    <property type="project" value="UniProtKB-UniRule"/>
</dbReference>
<dbReference type="GO" id="GO:0030170">
    <property type="term" value="F:pyridoxal phosphate binding"/>
    <property type="evidence" value="ECO:0007669"/>
    <property type="project" value="InterPro"/>
</dbReference>
<dbReference type="GO" id="GO:0000105">
    <property type="term" value="P:L-histidine biosynthetic process"/>
    <property type="evidence" value="ECO:0007669"/>
    <property type="project" value="UniProtKB-UniRule"/>
</dbReference>
<dbReference type="CDD" id="cd00609">
    <property type="entry name" value="AAT_like"/>
    <property type="match status" value="1"/>
</dbReference>
<dbReference type="Gene3D" id="3.90.1150.10">
    <property type="entry name" value="Aspartate Aminotransferase, domain 1"/>
    <property type="match status" value="1"/>
</dbReference>
<dbReference type="Gene3D" id="3.40.640.10">
    <property type="entry name" value="Type I PLP-dependent aspartate aminotransferase-like (Major domain)"/>
    <property type="match status" value="1"/>
</dbReference>
<dbReference type="HAMAP" id="MF_01023">
    <property type="entry name" value="HisC_aminotrans_2"/>
    <property type="match status" value="1"/>
</dbReference>
<dbReference type="InterPro" id="IPR004839">
    <property type="entry name" value="Aminotransferase_I/II_large"/>
</dbReference>
<dbReference type="InterPro" id="IPR005861">
    <property type="entry name" value="HisP_aminotrans"/>
</dbReference>
<dbReference type="InterPro" id="IPR015424">
    <property type="entry name" value="PyrdxlP-dep_Trfase"/>
</dbReference>
<dbReference type="InterPro" id="IPR015421">
    <property type="entry name" value="PyrdxlP-dep_Trfase_major"/>
</dbReference>
<dbReference type="InterPro" id="IPR015422">
    <property type="entry name" value="PyrdxlP-dep_Trfase_small"/>
</dbReference>
<dbReference type="NCBIfam" id="TIGR01141">
    <property type="entry name" value="hisC"/>
    <property type="match status" value="1"/>
</dbReference>
<dbReference type="PANTHER" id="PTHR42885:SF2">
    <property type="entry name" value="HISTIDINOL-PHOSPHATE AMINOTRANSFERASE"/>
    <property type="match status" value="1"/>
</dbReference>
<dbReference type="PANTHER" id="PTHR42885">
    <property type="entry name" value="HISTIDINOL-PHOSPHATE AMINOTRANSFERASE-RELATED"/>
    <property type="match status" value="1"/>
</dbReference>
<dbReference type="Pfam" id="PF00155">
    <property type="entry name" value="Aminotran_1_2"/>
    <property type="match status" value="1"/>
</dbReference>
<dbReference type="SUPFAM" id="SSF53383">
    <property type="entry name" value="PLP-dependent transferases"/>
    <property type="match status" value="1"/>
</dbReference>
<name>HIS82_BURP1</name>
<comment type="catalytic activity">
    <reaction evidence="1">
        <text>L-histidinol phosphate + 2-oxoglutarate = 3-(imidazol-4-yl)-2-oxopropyl phosphate + L-glutamate</text>
        <dbReference type="Rhea" id="RHEA:23744"/>
        <dbReference type="ChEBI" id="CHEBI:16810"/>
        <dbReference type="ChEBI" id="CHEBI:29985"/>
        <dbReference type="ChEBI" id="CHEBI:57766"/>
        <dbReference type="ChEBI" id="CHEBI:57980"/>
        <dbReference type="EC" id="2.6.1.9"/>
    </reaction>
</comment>
<comment type="cofactor">
    <cofactor evidence="1">
        <name>pyridoxal 5'-phosphate</name>
        <dbReference type="ChEBI" id="CHEBI:597326"/>
    </cofactor>
</comment>
<comment type="pathway">
    <text evidence="1">Amino-acid biosynthesis; L-histidine biosynthesis; L-histidine from 5-phospho-alpha-D-ribose 1-diphosphate: step 7/9.</text>
</comment>
<comment type="subunit">
    <text evidence="1">Homodimer.</text>
</comment>
<comment type="similarity">
    <text evidence="1">Belongs to the class-II pyridoxal-phosphate-dependent aminotransferase family. Histidinol-phosphate aminotransferase subfamily.</text>
</comment>
<reference key="1">
    <citation type="journal article" date="2010" name="Genome Biol. Evol.">
        <title>Continuing evolution of Burkholderia mallei through genome reduction and large-scale rearrangements.</title>
        <authorList>
            <person name="Losada L."/>
            <person name="Ronning C.M."/>
            <person name="DeShazer D."/>
            <person name="Woods D."/>
            <person name="Fedorova N."/>
            <person name="Kim H.S."/>
            <person name="Shabalina S.A."/>
            <person name="Pearson T.R."/>
            <person name="Brinkac L."/>
            <person name="Tan P."/>
            <person name="Nandi T."/>
            <person name="Crabtree J."/>
            <person name="Badger J."/>
            <person name="Beckstrom-Sternberg S."/>
            <person name="Saqib M."/>
            <person name="Schutzer S.E."/>
            <person name="Keim P."/>
            <person name="Nierman W.C."/>
        </authorList>
    </citation>
    <scope>NUCLEOTIDE SEQUENCE [LARGE SCALE GENOMIC DNA]</scope>
    <source>
        <strain>1710b</strain>
    </source>
</reference>
<accession>Q3JMZ7</accession>
<feature type="chain" id="PRO_0000230207" description="Histidinol-phosphate aminotransferase 2">
    <location>
        <begin position="1"/>
        <end position="356"/>
    </location>
</feature>
<feature type="modified residue" description="N6-(pyridoxal phosphate)lysine" evidence="1">
    <location>
        <position position="217"/>
    </location>
</feature>
<evidence type="ECO:0000255" key="1">
    <source>
        <dbReference type="HAMAP-Rule" id="MF_01023"/>
    </source>
</evidence>
<sequence length="356" mass="38142">MTTPEDIIRRDVLAMTGYPVPDATGFVKLDAMENPYSLPAPLAAELGERLAHVALNRYPAPRPAALIDRLRAVTGVPAACDVLLGNGSDELISMLAMACAKPGAKVLAPVPGFVMYELSAKFAQLEFVGVPLRADLTLDIDAMLAALAEHRPALVYLAYPNNPTGTLYPDEDVERIIAAAAASLVVIDEAYQPFAQRSWLPRAAQFDNVVVMRTMSKLGLAGIRLGYLVGLPAWLVQFDKVRPPYNVNVLTQAAAEFLLERVDVLDAQAAQLRDARTALAHAIGALPGATVFPSAGNFLLVRVPDAAAVFDVLLTERVLIKNVSKMHPLLANCVRVTVGSPEENARLLAALKLALP</sequence>